<feature type="signal peptide" evidence="2">
    <location>
        <begin position="1"/>
        <end position="27"/>
    </location>
</feature>
<feature type="chain" id="PRO_0000379627" description="Defensin-like protein 45">
    <location>
        <begin position="28"/>
        <end position="81"/>
    </location>
</feature>
<feature type="disulfide bond" evidence="1">
    <location>
        <begin position="40"/>
        <end position="79"/>
    </location>
</feature>
<feature type="disulfide bond" evidence="1">
    <location>
        <begin position="44"/>
        <end position="67"/>
    </location>
</feature>
<feature type="disulfide bond" evidence="1">
    <location>
        <begin position="53"/>
        <end position="77"/>
    </location>
</feature>
<feature type="disulfide bond" evidence="1">
    <location>
        <begin position="57"/>
        <end position="78"/>
    </location>
</feature>
<comment type="subcellular location">
    <subcellularLocation>
        <location evidence="1">Secreted</location>
    </subcellularLocation>
</comment>
<comment type="similarity">
    <text evidence="3">Belongs to the DEFL family.</text>
</comment>
<evidence type="ECO:0000250" key="1"/>
<evidence type="ECO:0000255" key="2"/>
<evidence type="ECO:0000305" key="3"/>
<name>DEF45_ARATH</name>
<organism>
    <name type="scientific">Arabidopsis thaliana</name>
    <name type="common">Mouse-ear cress</name>
    <dbReference type="NCBI Taxonomy" id="3702"/>
    <lineage>
        <taxon>Eukaryota</taxon>
        <taxon>Viridiplantae</taxon>
        <taxon>Streptophyta</taxon>
        <taxon>Embryophyta</taxon>
        <taxon>Tracheophyta</taxon>
        <taxon>Spermatophyta</taxon>
        <taxon>Magnoliopsida</taxon>
        <taxon>eudicotyledons</taxon>
        <taxon>Gunneridae</taxon>
        <taxon>Pentapetalae</taxon>
        <taxon>rosids</taxon>
        <taxon>malvids</taxon>
        <taxon>Brassicales</taxon>
        <taxon>Brassicaceae</taxon>
        <taxon>Camelineae</taxon>
        <taxon>Arabidopsis</taxon>
    </lineage>
</organism>
<reference key="1">
    <citation type="journal article" date="2000" name="Nature">
        <title>Sequence and analysis of chromosome 3 of the plant Arabidopsis thaliana.</title>
        <authorList>
            <person name="Salanoubat M."/>
            <person name="Lemcke K."/>
            <person name="Rieger M."/>
            <person name="Ansorge W."/>
            <person name="Unseld M."/>
            <person name="Fartmann B."/>
            <person name="Valle G."/>
            <person name="Bloecker H."/>
            <person name="Perez-Alonso M."/>
            <person name="Obermaier B."/>
            <person name="Delseny M."/>
            <person name="Boutry M."/>
            <person name="Grivell L.A."/>
            <person name="Mache R."/>
            <person name="Puigdomenech P."/>
            <person name="De Simone V."/>
            <person name="Choisne N."/>
            <person name="Artiguenave F."/>
            <person name="Robert C."/>
            <person name="Brottier P."/>
            <person name="Wincker P."/>
            <person name="Cattolico L."/>
            <person name="Weissenbach J."/>
            <person name="Saurin W."/>
            <person name="Quetier F."/>
            <person name="Schaefer M."/>
            <person name="Mueller-Auer S."/>
            <person name="Gabel C."/>
            <person name="Fuchs M."/>
            <person name="Benes V."/>
            <person name="Wurmbach E."/>
            <person name="Drzonek H."/>
            <person name="Erfle H."/>
            <person name="Jordan N."/>
            <person name="Bangert S."/>
            <person name="Wiedelmann R."/>
            <person name="Kranz H."/>
            <person name="Voss H."/>
            <person name="Holland R."/>
            <person name="Brandt P."/>
            <person name="Nyakatura G."/>
            <person name="Vezzi A."/>
            <person name="D'Angelo M."/>
            <person name="Pallavicini A."/>
            <person name="Toppo S."/>
            <person name="Simionati B."/>
            <person name="Conrad A."/>
            <person name="Hornischer K."/>
            <person name="Kauer G."/>
            <person name="Loehnert T.-H."/>
            <person name="Nordsiek G."/>
            <person name="Reichelt J."/>
            <person name="Scharfe M."/>
            <person name="Schoen O."/>
            <person name="Bargues M."/>
            <person name="Terol J."/>
            <person name="Climent J."/>
            <person name="Navarro P."/>
            <person name="Collado C."/>
            <person name="Perez-Perez A."/>
            <person name="Ottenwaelder B."/>
            <person name="Duchemin D."/>
            <person name="Cooke R."/>
            <person name="Laudie M."/>
            <person name="Berger-Llauro C."/>
            <person name="Purnelle B."/>
            <person name="Masuy D."/>
            <person name="de Haan M."/>
            <person name="Maarse A.C."/>
            <person name="Alcaraz J.-P."/>
            <person name="Cottet A."/>
            <person name="Casacuberta E."/>
            <person name="Monfort A."/>
            <person name="Argiriou A."/>
            <person name="Flores M."/>
            <person name="Liguori R."/>
            <person name="Vitale D."/>
            <person name="Mannhaupt G."/>
            <person name="Haase D."/>
            <person name="Schoof H."/>
            <person name="Rudd S."/>
            <person name="Zaccaria P."/>
            <person name="Mewes H.-W."/>
            <person name="Mayer K.F.X."/>
            <person name="Kaul S."/>
            <person name="Town C.D."/>
            <person name="Koo H.L."/>
            <person name="Tallon L.J."/>
            <person name="Jenkins J."/>
            <person name="Rooney T."/>
            <person name="Rizzo M."/>
            <person name="Walts A."/>
            <person name="Utterback T."/>
            <person name="Fujii C.Y."/>
            <person name="Shea T.P."/>
            <person name="Creasy T.H."/>
            <person name="Haas B."/>
            <person name="Maiti R."/>
            <person name="Wu D."/>
            <person name="Peterson J."/>
            <person name="Van Aken S."/>
            <person name="Pai G."/>
            <person name="Militscher J."/>
            <person name="Sellers P."/>
            <person name="Gill J.E."/>
            <person name="Feldblyum T.V."/>
            <person name="Preuss D."/>
            <person name="Lin X."/>
            <person name="Nierman W.C."/>
            <person name="Salzberg S.L."/>
            <person name="White O."/>
            <person name="Venter J.C."/>
            <person name="Fraser C.M."/>
            <person name="Kaneko T."/>
            <person name="Nakamura Y."/>
            <person name="Sato S."/>
            <person name="Kato T."/>
            <person name="Asamizu E."/>
            <person name="Sasamoto S."/>
            <person name="Kimura T."/>
            <person name="Idesawa K."/>
            <person name="Kawashima K."/>
            <person name="Kishida Y."/>
            <person name="Kiyokawa C."/>
            <person name="Kohara M."/>
            <person name="Matsumoto M."/>
            <person name="Matsuno A."/>
            <person name="Muraki A."/>
            <person name="Nakayama S."/>
            <person name="Nakazaki N."/>
            <person name="Shinpo S."/>
            <person name="Takeuchi C."/>
            <person name="Wada T."/>
            <person name="Watanabe A."/>
            <person name="Yamada M."/>
            <person name="Yasuda M."/>
            <person name="Tabata S."/>
        </authorList>
    </citation>
    <scope>NUCLEOTIDE SEQUENCE [LARGE SCALE GENOMIC DNA]</scope>
    <source>
        <strain>cv. Columbia</strain>
    </source>
</reference>
<reference key="2">
    <citation type="journal article" date="2017" name="Plant J.">
        <title>Araport11: a complete reannotation of the Arabidopsis thaliana reference genome.</title>
        <authorList>
            <person name="Cheng C.Y."/>
            <person name="Krishnakumar V."/>
            <person name="Chan A.P."/>
            <person name="Thibaud-Nissen F."/>
            <person name="Schobel S."/>
            <person name="Town C.D."/>
        </authorList>
    </citation>
    <scope>GENOME REANNOTATION</scope>
    <source>
        <strain>cv. Columbia</strain>
    </source>
</reference>
<reference key="3">
    <citation type="journal article" date="2005" name="Plant Physiol.">
        <title>Genome organization of more than 300 defensin-like genes in Arabidopsis.</title>
        <authorList>
            <person name="Silverstein K.A.T."/>
            <person name="Graham M.A."/>
            <person name="Paape T.D."/>
            <person name="VandenBosch K.A."/>
        </authorList>
    </citation>
    <scope>GENE FAMILY</scope>
</reference>
<dbReference type="EMBL" id="AC011437">
    <property type="status" value="NOT_ANNOTATED_CDS"/>
    <property type="molecule type" value="Genomic_DNA"/>
</dbReference>
<dbReference type="EMBL" id="AC022287">
    <property type="status" value="NOT_ANNOTATED_CDS"/>
    <property type="molecule type" value="Genomic_DNA"/>
</dbReference>
<dbReference type="EMBL" id="CP002686">
    <property type="protein sequence ID" value="AEE74095.1"/>
    <property type="molecule type" value="Genomic_DNA"/>
</dbReference>
<dbReference type="RefSeq" id="NP_001030632.1">
    <property type="nucleotide sequence ID" value="NM_001035555.2"/>
</dbReference>
<dbReference type="SMR" id="Q2V3Y8"/>
<dbReference type="PaxDb" id="3702-AT3G04545.1"/>
<dbReference type="ProteomicsDB" id="224113"/>
<dbReference type="EnsemblPlants" id="AT3G04545.1">
    <property type="protein sequence ID" value="AT3G04545.1"/>
    <property type="gene ID" value="AT3G04545"/>
</dbReference>
<dbReference type="GeneID" id="3768780"/>
<dbReference type="Gramene" id="AT3G04545.1">
    <property type="protein sequence ID" value="AT3G04545.1"/>
    <property type="gene ID" value="AT3G04545"/>
</dbReference>
<dbReference type="KEGG" id="ath:AT3G04545"/>
<dbReference type="Araport" id="AT3G04545"/>
<dbReference type="TAIR" id="AT3G04545"/>
<dbReference type="HOGENOM" id="CLU_165205_1_0_1"/>
<dbReference type="InParanoid" id="Q2V3Y8"/>
<dbReference type="OMA" id="NGKCAAD"/>
<dbReference type="OrthoDB" id="1030254at2759"/>
<dbReference type="PhylomeDB" id="Q2V3Y8"/>
<dbReference type="PRO" id="PR:Q2V3Y8"/>
<dbReference type="Proteomes" id="UP000006548">
    <property type="component" value="Chromosome 3"/>
</dbReference>
<dbReference type="ExpressionAtlas" id="Q2V3Y8">
    <property type="expression patterns" value="baseline"/>
</dbReference>
<dbReference type="GO" id="GO:0005576">
    <property type="term" value="C:extracellular region"/>
    <property type="evidence" value="ECO:0007669"/>
    <property type="project" value="UniProtKB-SubCell"/>
</dbReference>
<dbReference type="GO" id="GO:0050832">
    <property type="term" value="P:defense response to fungus"/>
    <property type="evidence" value="ECO:0007669"/>
    <property type="project" value="UniProtKB-KW"/>
</dbReference>
<dbReference type="GO" id="GO:0031640">
    <property type="term" value="P:killing of cells of another organism"/>
    <property type="evidence" value="ECO:0007669"/>
    <property type="project" value="UniProtKB-KW"/>
</dbReference>
<dbReference type="InterPro" id="IPR056373">
    <property type="entry name" value="Defensin-like_dom"/>
</dbReference>
<dbReference type="Pfam" id="PF24552">
    <property type="entry name" value="Defensin"/>
    <property type="match status" value="1"/>
</dbReference>
<protein>
    <recommendedName>
        <fullName>Defensin-like protein 45</fullName>
    </recommendedName>
</protein>
<keyword id="KW-0929">Antimicrobial</keyword>
<keyword id="KW-1015">Disulfide bond</keyword>
<keyword id="KW-0295">Fungicide</keyword>
<keyword id="KW-0611">Plant defense</keyword>
<keyword id="KW-1185">Reference proteome</keyword>
<keyword id="KW-0964">Secreted</keyword>
<keyword id="KW-0732">Signal</keyword>
<proteinExistence type="evidence at transcript level"/>
<accession>Q2V3Y8</accession>
<gene>
    <name type="ordered locus">At3g04545</name>
    <name type="ORF">F7O18</name>
    <name type="ORF">T27C4</name>
</gene>
<sequence length="81" mass="8638">MAITKTSATFVLLIILAASLSNFNVLASDIKPTGRIDNQCKRMCSATYGNGKCAADCRSDGFSSGQCFTSPPFDNRCCCNN</sequence>